<gene>
    <name evidence="1" type="primary">tig</name>
    <name type="ordered locus">Achl_2160</name>
</gene>
<comment type="function">
    <text evidence="1">Involved in protein export. Acts as a chaperone by maintaining the newly synthesized protein in an open conformation. Functions as a peptidyl-prolyl cis-trans isomerase.</text>
</comment>
<comment type="catalytic activity">
    <reaction evidence="1">
        <text>[protein]-peptidylproline (omega=180) = [protein]-peptidylproline (omega=0)</text>
        <dbReference type="Rhea" id="RHEA:16237"/>
        <dbReference type="Rhea" id="RHEA-COMP:10747"/>
        <dbReference type="Rhea" id="RHEA-COMP:10748"/>
        <dbReference type="ChEBI" id="CHEBI:83833"/>
        <dbReference type="ChEBI" id="CHEBI:83834"/>
        <dbReference type="EC" id="5.2.1.8"/>
    </reaction>
</comment>
<comment type="subcellular location">
    <subcellularLocation>
        <location>Cytoplasm</location>
    </subcellularLocation>
    <text evidence="1">About half TF is bound to the ribosome near the polypeptide exit tunnel while the other half is free in the cytoplasm.</text>
</comment>
<comment type="domain">
    <text evidence="1">Consists of 3 domains; the N-terminus binds the ribosome, the middle domain has PPIase activity, while the C-terminus has intrinsic chaperone activity on its own.</text>
</comment>
<comment type="similarity">
    <text evidence="1">Belongs to the FKBP-type PPIase family. Tig subfamily.</text>
</comment>
<protein>
    <recommendedName>
        <fullName evidence="1">Trigger factor</fullName>
        <shortName evidence="1">TF</shortName>
        <ecNumber evidence="1">5.2.1.8</ecNumber>
    </recommendedName>
    <alternativeName>
        <fullName evidence="1">PPIase</fullName>
    </alternativeName>
</protein>
<name>TIG_PSECP</name>
<proteinExistence type="inferred from homology"/>
<reference key="1">
    <citation type="submission" date="2009-01" db="EMBL/GenBank/DDBJ databases">
        <title>Complete sequence of chromosome of Arthrobacter chlorophenolicus A6.</title>
        <authorList>
            <consortium name="US DOE Joint Genome Institute"/>
            <person name="Lucas S."/>
            <person name="Copeland A."/>
            <person name="Lapidus A."/>
            <person name="Glavina del Rio T."/>
            <person name="Tice H."/>
            <person name="Bruce D."/>
            <person name="Goodwin L."/>
            <person name="Pitluck S."/>
            <person name="Goltsman E."/>
            <person name="Clum A."/>
            <person name="Larimer F."/>
            <person name="Land M."/>
            <person name="Hauser L."/>
            <person name="Kyrpides N."/>
            <person name="Mikhailova N."/>
            <person name="Jansson J."/>
            <person name="Richardson P."/>
        </authorList>
    </citation>
    <scope>NUCLEOTIDE SEQUENCE [LARGE SCALE GENOMIC DNA]</scope>
    <source>
        <strain>ATCC 700700 / DSM 12829 / CIP 107037 / JCM 12360 / KCTC 9906 / NCIMB 13794 / A6</strain>
    </source>
</reference>
<keyword id="KW-0131">Cell cycle</keyword>
<keyword id="KW-0132">Cell division</keyword>
<keyword id="KW-0143">Chaperone</keyword>
<keyword id="KW-0963">Cytoplasm</keyword>
<keyword id="KW-0413">Isomerase</keyword>
<keyword id="KW-0697">Rotamase</keyword>
<sequence length="464" mass="49787">MKSAVENLTPTRVKLNVEVPFEELKPSIDSAYKTVASQIQVPGFRKGKVPAKLIDQRVGRGYVLETAINDGLNGWYQAAVQESGIRPLSRPEVEITEVPDPSATDGGLKFAAEVDVRPEIELPDYAGIKVEVAAAESSDADVDKALDELRGRFGTLKSVDRPAADGDFLTIDITATIDGEEVDSAAGLSYQVGAGTMLEGMDEAVTGLSADEDAIFDTTLVGGDHAGEAAQVKVAVKAVKERELPEANDDFAQLASEFDTLAELREDLAKQAAESKVVEQGVEARDKVLDKLVELVEVPVPDSVVEEQLEAHFKEGNGHGDGEHDTEEHREEVRANTARAFQNEIILDAIAEKEEVDVSQNELIDYIVTTASQYGMDPNQFAQIIDQSGQVPMMVSEVRRRKALAVVLGQATVTDSEGNAVDLSDFVRPGGEEEAPAAEVTEADTAEGEATEVPAEDEKAEAKA</sequence>
<dbReference type="EC" id="5.2.1.8" evidence="1"/>
<dbReference type="EMBL" id="CP001341">
    <property type="protein sequence ID" value="ACL40128.1"/>
    <property type="molecule type" value="Genomic_DNA"/>
</dbReference>
<dbReference type="RefSeq" id="WP_015937345.1">
    <property type="nucleotide sequence ID" value="NC_011886.1"/>
</dbReference>
<dbReference type="SMR" id="B8HA36"/>
<dbReference type="STRING" id="452863.Achl_2160"/>
<dbReference type="KEGG" id="ach:Achl_2160"/>
<dbReference type="eggNOG" id="COG0544">
    <property type="taxonomic scope" value="Bacteria"/>
</dbReference>
<dbReference type="HOGENOM" id="CLU_033058_3_0_11"/>
<dbReference type="OrthoDB" id="9767721at2"/>
<dbReference type="Proteomes" id="UP000002505">
    <property type="component" value="Chromosome"/>
</dbReference>
<dbReference type="GO" id="GO:0005737">
    <property type="term" value="C:cytoplasm"/>
    <property type="evidence" value="ECO:0007669"/>
    <property type="project" value="UniProtKB-SubCell"/>
</dbReference>
<dbReference type="GO" id="GO:0003755">
    <property type="term" value="F:peptidyl-prolyl cis-trans isomerase activity"/>
    <property type="evidence" value="ECO:0007669"/>
    <property type="project" value="UniProtKB-UniRule"/>
</dbReference>
<dbReference type="GO" id="GO:0044183">
    <property type="term" value="F:protein folding chaperone"/>
    <property type="evidence" value="ECO:0007669"/>
    <property type="project" value="TreeGrafter"/>
</dbReference>
<dbReference type="GO" id="GO:0043022">
    <property type="term" value="F:ribosome binding"/>
    <property type="evidence" value="ECO:0007669"/>
    <property type="project" value="TreeGrafter"/>
</dbReference>
<dbReference type="GO" id="GO:0051083">
    <property type="term" value="P:'de novo' cotranslational protein folding"/>
    <property type="evidence" value="ECO:0007669"/>
    <property type="project" value="TreeGrafter"/>
</dbReference>
<dbReference type="GO" id="GO:0051301">
    <property type="term" value="P:cell division"/>
    <property type="evidence" value="ECO:0007669"/>
    <property type="project" value="UniProtKB-KW"/>
</dbReference>
<dbReference type="GO" id="GO:0061077">
    <property type="term" value="P:chaperone-mediated protein folding"/>
    <property type="evidence" value="ECO:0007669"/>
    <property type="project" value="TreeGrafter"/>
</dbReference>
<dbReference type="GO" id="GO:0015031">
    <property type="term" value="P:protein transport"/>
    <property type="evidence" value="ECO:0007669"/>
    <property type="project" value="UniProtKB-UniRule"/>
</dbReference>
<dbReference type="GO" id="GO:0043335">
    <property type="term" value="P:protein unfolding"/>
    <property type="evidence" value="ECO:0007669"/>
    <property type="project" value="TreeGrafter"/>
</dbReference>
<dbReference type="Gene3D" id="3.10.50.40">
    <property type="match status" value="1"/>
</dbReference>
<dbReference type="Gene3D" id="3.30.70.1050">
    <property type="entry name" value="Trigger factor ribosome-binding domain"/>
    <property type="match status" value="1"/>
</dbReference>
<dbReference type="Gene3D" id="1.10.3120.10">
    <property type="entry name" value="Trigger factor, C-terminal domain"/>
    <property type="match status" value="1"/>
</dbReference>
<dbReference type="HAMAP" id="MF_00303">
    <property type="entry name" value="Trigger_factor_Tig"/>
    <property type="match status" value="1"/>
</dbReference>
<dbReference type="InterPro" id="IPR046357">
    <property type="entry name" value="PPIase_dom_sf"/>
</dbReference>
<dbReference type="InterPro" id="IPR001179">
    <property type="entry name" value="PPIase_FKBP_dom"/>
</dbReference>
<dbReference type="InterPro" id="IPR005215">
    <property type="entry name" value="Trig_fac"/>
</dbReference>
<dbReference type="InterPro" id="IPR008880">
    <property type="entry name" value="Trigger_fac_C"/>
</dbReference>
<dbReference type="InterPro" id="IPR037041">
    <property type="entry name" value="Trigger_fac_C_sf"/>
</dbReference>
<dbReference type="InterPro" id="IPR008881">
    <property type="entry name" value="Trigger_fac_ribosome-bd_bac"/>
</dbReference>
<dbReference type="InterPro" id="IPR036611">
    <property type="entry name" value="Trigger_fac_ribosome-bd_sf"/>
</dbReference>
<dbReference type="InterPro" id="IPR027304">
    <property type="entry name" value="Trigger_fact/SurA_dom_sf"/>
</dbReference>
<dbReference type="NCBIfam" id="TIGR00115">
    <property type="entry name" value="tig"/>
    <property type="match status" value="1"/>
</dbReference>
<dbReference type="PANTHER" id="PTHR30560">
    <property type="entry name" value="TRIGGER FACTOR CHAPERONE AND PEPTIDYL-PROLYL CIS/TRANS ISOMERASE"/>
    <property type="match status" value="1"/>
</dbReference>
<dbReference type="PANTHER" id="PTHR30560:SF3">
    <property type="entry name" value="TRIGGER FACTOR-LIKE PROTEIN TIG, CHLOROPLASTIC"/>
    <property type="match status" value="1"/>
</dbReference>
<dbReference type="Pfam" id="PF00254">
    <property type="entry name" value="FKBP_C"/>
    <property type="match status" value="1"/>
</dbReference>
<dbReference type="Pfam" id="PF05698">
    <property type="entry name" value="Trigger_C"/>
    <property type="match status" value="1"/>
</dbReference>
<dbReference type="Pfam" id="PF05697">
    <property type="entry name" value="Trigger_N"/>
    <property type="match status" value="1"/>
</dbReference>
<dbReference type="PIRSF" id="PIRSF003095">
    <property type="entry name" value="Trigger_factor"/>
    <property type="match status" value="1"/>
</dbReference>
<dbReference type="SUPFAM" id="SSF54534">
    <property type="entry name" value="FKBP-like"/>
    <property type="match status" value="1"/>
</dbReference>
<dbReference type="SUPFAM" id="SSF109998">
    <property type="entry name" value="Triger factor/SurA peptide-binding domain-like"/>
    <property type="match status" value="1"/>
</dbReference>
<dbReference type="SUPFAM" id="SSF102735">
    <property type="entry name" value="Trigger factor ribosome-binding domain"/>
    <property type="match status" value="1"/>
</dbReference>
<organism>
    <name type="scientific">Pseudarthrobacter chlorophenolicus (strain ATCC 700700 / DSM 12829 / CIP 107037 / JCM 12360 / KCTC 9906 / NCIMB 13794 / A6)</name>
    <name type="common">Arthrobacter chlorophenolicus</name>
    <dbReference type="NCBI Taxonomy" id="452863"/>
    <lineage>
        <taxon>Bacteria</taxon>
        <taxon>Bacillati</taxon>
        <taxon>Actinomycetota</taxon>
        <taxon>Actinomycetes</taxon>
        <taxon>Micrococcales</taxon>
        <taxon>Micrococcaceae</taxon>
        <taxon>Pseudarthrobacter</taxon>
    </lineage>
</organism>
<accession>B8HA36</accession>
<evidence type="ECO:0000255" key="1">
    <source>
        <dbReference type="HAMAP-Rule" id="MF_00303"/>
    </source>
</evidence>
<evidence type="ECO:0000256" key="2">
    <source>
        <dbReference type="SAM" id="MobiDB-lite"/>
    </source>
</evidence>
<feature type="chain" id="PRO_1000198138" description="Trigger factor">
    <location>
        <begin position="1"/>
        <end position="464"/>
    </location>
</feature>
<feature type="domain" description="PPIase FKBP-type" evidence="1">
    <location>
        <begin position="166"/>
        <end position="245"/>
    </location>
</feature>
<feature type="region of interest" description="Disordered" evidence="2">
    <location>
        <begin position="426"/>
        <end position="464"/>
    </location>
</feature>
<feature type="compositionally biased region" description="Acidic residues" evidence="2">
    <location>
        <begin position="432"/>
        <end position="455"/>
    </location>
</feature>